<gene>
    <name type="ORF">H0813E03.4</name>
    <name type="ORF">OsI_15393</name>
</gene>
<feature type="chain" id="PRO_0000415751" description="Probable aldo-keto reductase 3">
    <location>
        <begin position="1"/>
        <end position="355"/>
    </location>
</feature>
<feature type="active site" description="Proton donor" evidence="1">
    <location>
        <position position="70"/>
    </location>
</feature>
<feature type="binding site" evidence="1">
    <location>
        <position position="138"/>
    </location>
    <ligand>
        <name>substrate</name>
    </ligand>
</feature>
<feature type="binding site" evidence="1">
    <location>
        <begin position="217"/>
        <end position="227"/>
    </location>
    <ligand>
        <name>NADP(+)</name>
        <dbReference type="ChEBI" id="CHEBI:58349"/>
    </ligand>
</feature>
<feature type="sequence conflict" description="In Ref. 1; CAH66327." evidence="2" ref="1">
    <original>G</original>
    <variation>V</variation>
    <location>
        <position position="83"/>
    </location>
</feature>
<keyword id="KW-0521">NADP</keyword>
<keyword id="KW-0560">Oxidoreductase</keyword>
<keyword id="KW-1185">Reference proteome</keyword>
<evidence type="ECO:0000250" key="1"/>
<evidence type="ECO:0000305" key="2"/>
<organism>
    <name type="scientific">Oryza sativa subsp. indica</name>
    <name type="common">Rice</name>
    <dbReference type="NCBI Taxonomy" id="39946"/>
    <lineage>
        <taxon>Eukaryota</taxon>
        <taxon>Viridiplantae</taxon>
        <taxon>Streptophyta</taxon>
        <taxon>Embryophyta</taxon>
        <taxon>Tracheophyta</taxon>
        <taxon>Spermatophyta</taxon>
        <taxon>Magnoliopsida</taxon>
        <taxon>Liliopsida</taxon>
        <taxon>Poales</taxon>
        <taxon>Poaceae</taxon>
        <taxon>BOP clade</taxon>
        <taxon>Oryzoideae</taxon>
        <taxon>Oryzeae</taxon>
        <taxon>Oryzinae</taxon>
        <taxon>Oryza</taxon>
        <taxon>Oryza sativa</taxon>
    </lineage>
</organism>
<proteinExistence type="inferred from homology"/>
<protein>
    <recommendedName>
        <fullName>Probable aldo-keto reductase 3</fullName>
        <ecNumber>1.1.1.-</ecNumber>
    </recommendedName>
</protein>
<name>AKR3_ORYSI</name>
<sequence length="355" mass="38231">MAAAAATAPAAAVVRRMKLGSQGMEVSAQGLGCMGMSAVYGERKPEADMVALVRHAVAAGVTFLDTSDVYGPHTNEVLVGKAGAAAAATEEEVQVQVATKFGITPAWEVRGDPAYVRAACEGSLRRLGVGCIDLYYQHRIDSTVPVEITMGELKKLVEEGKIKYIGLSEASASTIRRAHVVHPITAVQIEWSLWSRDVEEDIVPTCRELGIGIVAYSPLGRGFFSSGAKLVDELPDDDFRKSLPRFQPENLEKNAAIFEKVNAMAARKGCTSSQLALAWVHHQGSDVCPIPGTTKIHNFDQNVGALSVKLTPDEMSELESYASADVVQGDRYHGTFLNTWKNSETPPLSSWRSGN</sequence>
<comment type="similarity">
    <text evidence="2">Belongs to the aldo/keto reductase family.</text>
</comment>
<reference key="1">
    <citation type="journal article" date="2002" name="Nature">
        <title>Sequence and analysis of rice chromosome 4.</title>
        <authorList>
            <person name="Feng Q."/>
            <person name="Zhang Y."/>
            <person name="Hao P."/>
            <person name="Wang S."/>
            <person name="Fu G."/>
            <person name="Huang Y."/>
            <person name="Li Y."/>
            <person name="Zhu J."/>
            <person name="Liu Y."/>
            <person name="Hu X."/>
            <person name="Jia P."/>
            <person name="Zhang Y."/>
            <person name="Zhao Q."/>
            <person name="Ying K."/>
            <person name="Yu S."/>
            <person name="Tang Y."/>
            <person name="Weng Q."/>
            <person name="Zhang L."/>
            <person name="Lu Y."/>
            <person name="Mu J."/>
            <person name="Lu Y."/>
            <person name="Zhang L.S."/>
            <person name="Yu Z."/>
            <person name="Fan D."/>
            <person name="Liu X."/>
            <person name="Lu T."/>
            <person name="Li C."/>
            <person name="Wu Y."/>
            <person name="Sun T."/>
            <person name="Lei H."/>
            <person name="Li T."/>
            <person name="Hu H."/>
            <person name="Guan J."/>
            <person name="Wu M."/>
            <person name="Zhang R."/>
            <person name="Zhou B."/>
            <person name="Chen Z."/>
            <person name="Chen L."/>
            <person name="Jin Z."/>
            <person name="Wang R."/>
            <person name="Yin H."/>
            <person name="Cai Z."/>
            <person name="Ren S."/>
            <person name="Lv G."/>
            <person name="Gu W."/>
            <person name="Zhu G."/>
            <person name="Tu Y."/>
            <person name="Jia J."/>
            <person name="Zhang Y."/>
            <person name="Chen J."/>
            <person name="Kang H."/>
            <person name="Chen X."/>
            <person name="Shao C."/>
            <person name="Sun Y."/>
            <person name="Hu Q."/>
            <person name="Zhang X."/>
            <person name="Zhang W."/>
            <person name="Wang L."/>
            <person name="Ding C."/>
            <person name="Sheng H."/>
            <person name="Gu J."/>
            <person name="Chen S."/>
            <person name="Ni L."/>
            <person name="Zhu F."/>
            <person name="Chen W."/>
            <person name="Lan L."/>
            <person name="Lai Y."/>
            <person name="Cheng Z."/>
            <person name="Gu M."/>
            <person name="Jiang J."/>
            <person name="Li J."/>
            <person name="Hong G."/>
            <person name="Xue Y."/>
            <person name="Han B."/>
        </authorList>
    </citation>
    <scope>NUCLEOTIDE SEQUENCE [LARGE SCALE GENOMIC DNA]</scope>
    <source>
        <strain>cv. Guang-Lu-Ai No.4</strain>
    </source>
</reference>
<reference key="2">
    <citation type="journal article" date="2005" name="PLoS Biol.">
        <title>The genomes of Oryza sativa: a history of duplications.</title>
        <authorList>
            <person name="Yu J."/>
            <person name="Wang J."/>
            <person name="Lin W."/>
            <person name="Li S."/>
            <person name="Li H."/>
            <person name="Zhou J."/>
            <person name="Ni P."/>
            <person name="Dong W."/>
            <person name="Hu S."/>
            <person name="Zeng C."/>
            <person name="Zhang J."/>
            <person name="Zhang Y."/>
            <person name="Li R."/>
            <person name="Xu Z."/>
            <person name="Li S."/>
            <person name="Li X."/>
            <person name="Zheng H."/>
            <person name="Cong L."/>
            <person name="Lin L."/>
            <person name="Yin J."/>
            <person name="Geng J."/>
            <person name="Li G."/>
            <person name="Shi J."/>
            <person name="Liu J."/>
            <person name="Lv H."/>
            <person name="Li J."/>
            <person name="Wang J."/>
            <person name="Deng Y."/>
            <person name="Ran L."/>
            <person name="Shi X."/>
            <person name="Wang X."/>
            <person name="Wu Q."/>
            <person name="Li C."/>
            <person name="Ren X."/>
            <person name="Wang J."/>
            <person name="Wang X."/>
            <person name="Li D."/>
            <person name="Liu D."/>
            <person name="Zhang X."/>
            <person name="Ji Z."/>
            <person name="Zhao W."/>
            <person name="Sun Y."/>
            <person name="Zhang Z."/>
            <person name="Bao J."/>
            <person name="Han Y."/>
            <person name="Dong L."/>
            <person name="Ji J."/>
            <person name="Chen P."/>
            <person name="Wu S."/>
            <person name="Liu J."/>
            <person name="Xiao Y."/>
            <person name="Bu D."/>
            <person name="Tan J."/>
            <person name="Yang L."/>
            <person name="Ye C."/>
            <person name="Zhang J."/>
            <person name="Xu J."/>
            <person name="Zhou Y."/>
            <person name="Yu Y."/>
            <person name="Zhang B."/>
            <person name="Zhuang S."/>
            <person name="Wei H."/>
            <person name="Liu B."/>
            <person name="Lei M."/>
            <person name="Yu H."/>
            <person name="Li Y."/>
            <person name="Xu H."/>
            <person name="Wei S."/>
            <person name="He X."/>
            <person name="Fang L."/>
            <person name="Zhang Z."/>
            <person name="Zhang Y."/>
            <person name="Huang X."/>
            <person name="Su Z."/>
            <person name="Tong W."/>
            <person name="Li J."/>
            <person name="Tong Z."/>
            <person name="Li S."/>
            <person name="Ye J."/>
            <person name="Wang L."/>
            <person name="Fang L."/>
            <person name="Lei T."/>
            <person name="Chen C.-S."/>
            <person name="Chen H.-C."/>
            <person name="Xu Z."/>
            <person name="Li H."/>
            <person name="Huang H."/>
            <person name="Zhang F."/>
            <person name="Xu H."/>
            <person name="Li N."/>
            <person name="Zhao C."/>
            <person name="Li S."/>
            <person name="Dong L."/>
            <person name="Huang Y."/>
            <person name="Li L."/>
            <person name="Xi Y."/>
            <person name="Qi Q."/>
            <person name="Li W."/>
            <person name="Zhang B."/>
            <person name="Hu W."/>
            <person name="Zhang Y."/>
            <person name="Tian X."/>
            <person name="Jiao Y."/>
            <person name="Liang X."/>
            <person name="Jin J."/>
            <person name="Gao L."/>
            <person name="Zheng W."/>
            <person name="Hao B."/>
            <person name="Liu S.-M."/>
            <person name="Wang W."/>
            <person name="Yuan L."/>
            <person name="Cao M."/>
            <person name="McDermott J."/>
            <person name="Samudrala R."/>
            <person name="Wang J."/>
            <person name="Wong G.K.-S."/>
            <person name="Yang H."/>
        </authorList>
    </citation>
    <scope>NUCLEOTIDE SEQUENCE [LARGE SCALE GENOMIC DNA]</scope>
    <source>
        <strain>cv. 93-11</strain>
    </source>
</reference>
<accession>A2XRZ6</accession>
<accession>Q01LN8</accession>
<dbReference type="EC" id="1.1.1.-"/>
<dbReference type="EMBL" id="CR855086">
    <property type="protein sequence ID" value="CAH66327.1"/>
    <property type="molecule type" value="Genomic_DNA"/>
</dbReference>
<dbReference type="EMBL" id="CM000129">
    <property type="protein sequence ID" value="EAY93606.1"/>
    <property type="molecule type" value="Genomic_DNA"/>
</dbReference>
<dbReference type="SMR" id="A2XRZ6"/>
<dbReference type="STRING" id="39946.A2XRZ6"/>
<dbReference type="EnsemblPlants" id="BGIOSGA016147-TA">
    <property type="protein sequence ID" value="BGIOSGA016147-PA"/>
    <property type="gene ID" value="BGIOSGA016147"/>
</dbReference>
<dbReference type="Gramene" id="BGIOSGA016147-TA">
    <property type="protein sequence ID" value="BGIOSGA016147-PA"/>
    <property type="gene ID" value="BGIOSGA016147"/>
</dbReference>
<dbReference type="HOGENOM" id="CLU_023205_2_1_1"/>
<dbReference type="OMA" id="YPVEETI"/>
<dbReference type="Proteomes" id="UP000007015">
    <property type="component" value="Chromosome 4"/>
</dbReference>
<dbReference type="GO" id="GO:0005737">
    <property type="term" value="C:cytoplasm"/>
    <property type="evidence" value="ECO:0007669"/>
    <property type="project" value="TreeGrafter"/>
</dbReference>
<dbReference type="GO" id="GO:0004033">
    <property type="term" value="F:aldo-keto reductase (NADPH) activity"/>
    <property type="evidence" value="ECO:0007669"/>
    <property type="project" value="TreeGrafter"/>
</dbReference>
<dbReference type="CDD" id="cd19145">
    <property type="entry name" value="AKR_AKR13D1"/>
    <property type="match status" value="1"/>
</dbReference>
<dbReference type="FunFam" id="3.20.20.100:FF:000048">
    <property type="entry name" value="Probable aldo-keto reductase 4"/>
    <property type="match status" value="1"/>
</dbReference>
<dbReference type="Gene3D" id="3.20.20.100">
    <property type="entry name" value="NADP-dependent oxidoreductase domain"/>
    <property type="match status" value="1"/>
</dbReference>
<dbReference type="InterPro" id="IPR050791">
    <property type="entry name" value="Aldo-Keto_reductase"/>
</dbReference>
<dbReference type="InterPro" id="IPR023210">
    <property type="entry name" value="NADP_OxRdtase_dom"/>
</dbReference>
<dbReference type="InterPro" id="IPR036812">
    <property type="entry name" value="NADP_OxRdtase_dom_sf"/>
</dbReference>
<dbReference type="PANTHER" id="PTHR43625">
    <property type="entry name" value="AFLATOXIN B1 ALDEHYDE REDUCTASE"/>
    <property type="match status" value="1"/>
</dbReference>
<dbReference type="PANTHER" id="PTHR43625:SF37">
    <property type="entry name" value="ALDO-KETO REDUCTASE 3-RELATED"/>
    <property type="match status" value="1"/>
</dbReference>
<dbReference type="Pfam" id="PF00248">
    <property type="entry name" value="Aldo_ket_red"/>
    <property type="match status" value="1"/>
</dbReference>
<dbReference type="SUPFAM" id="SSF51430">
    <property type="entry name" value="NAD(P)-linked oxidoreductase"/>
    <property type="match status" value="1"/>
</dbReference>